<proteinExistence type="inferred from homology"/>
<feature type="chain" id="PRO_0000337406" description="Elongation factor Tu 1">
    <location>
        <begin position="1"/>
        <end position="396"/>
    </location>
</feature>
<feature type="domain" description="tr-type G">
    <location>
        <begin position="10"/>
        <end position="206"/>
    </location>
</feature>
<feature type="region of interest" description="G1" evidence="1">
    <location>
        <begin position="19"/>
        <end position="26"/>
    </location>
</feature>
<feature type="region of interest" description="G2" evidence="1">
    <location>
        <begin position="60"/>
        <end position="64"/>
    </location>
</feature>
<feature type="region of interest" description="G3" evidence="1">
    <location>
        <begin position="81"/>
        <end position="84"/>
    </location>
</feature>
<feature type="region of interest" description="G4" evidence="1">
    <location>
        <begin position="136"/>
        <end position="139"/>
    </location>
</feature>
<feature type="region of interest" description="G5" evidence="1">
    <location>
        <begin position="174"/>
        <end position="176"/>
    </location>
</feature>
<feature type="binding site" evidence="2">
    <location>
        <begin position="19"/>
        <end position="26"/>
    </location>
    <ligand>
        <name>GTP</name>
        <dbReference type="ChEBI" id="CHEBI:37565"/>
    </ligand>
</feature>
<feature type="binding site" evidence="2">
    <location>
        <position position="26"/>
    </location>
    <ligand>
        <name>Mg(2+)</name>
        <dbReference type="ChEBI" id="CHEBI:18420"/>
    </ligand>
</feature>
<feature type="binding site" evidence="2">
    <location>
        <begin position="81"/>
        <end position="85"/>
    </location>
    <ligand>
        <name>GTP</name>
        <dbReference type="ChEBI" id="CHEBI:37565"/>
    </ligand>
</feature>
<feature type="binding site" evidence="2">
    <location>
        <begin position="136"/>
        <end position="139"/>
    </location>
    <ligand>
        <name>GTP</name>
        <dbReference type="ChEBI" id="CHEBI:37565"/>
    </ligand>
</feature>
<comment type="function">
    <text evidence="2">GTP hydrolase that promotes the GTP-dependent binding of aminoacyl-tRNA to the A-site of ribosomes during protein biosynthesis.</text>
</comment>
<comment type="catalytic activity">
    <reaction evidence="2">
        <text>GTP + H2O = GDP + phosphate + H(+)</text>
        <dbReference type="Rhea" id="RHEA:19669"/>
        <dbReference type="ChEBI" id="CHEBI:15377"/>
        <dbReference type="ChEBI" id="CHEBI:15378"/>
        <dbReference type="ChEBI" id="CHEBI:37565"/>
        <dbReference type="ChEBI" id="CHEBI:43474"/>
        <dbReference type="ChEBI" id="CHEBI:58189"/>
        <dbReference type="EC" id="3.6.5.3"/>
    </reaction>
    <physiologicalReaction direction="left-to-right" evidence="2">
        <dbReference type="Rhea" id="RHEA:19670"/>
    </physiologicalReaction>
</comment>
<comment type="subunit">
    <text evidence="2">Monomer.</text>
</comment>
<comment type="subcellular location">
    <subcellularLocation>
        <location evidence="2">Cytoplasm</location>
    </subcellularLocation>
</comment>
<comment type="similarity">
    <text evidence="2">Belongs to the TRAFAC class translation factor GTPase superfamily. Classic translation factor GTPase family. EF-Tu/EF-1A subfamily.</text>
</comment>
<protein>
    <recommendedName>
        <fullName evidence="2">Elongation factor Tu 1</fullName>
        <shortName evidence="2">EF-Tu 1</shortName>
        <ecNumber evidence="2">3.6.5.3</ecNumber>
    </recommendedName>
</protein>
<name>EFTU1_HYPNA</name>
<dbReference type="EC" id="3.6.5.3" evidence="2"/>
<dbReference type="EMBL" id="CP000158">
    <property type="protein sequence ID" value="ABI77504.1"/>
    <property type="molecule type" value="Genomic_DNA"/>
</dbReference>
<dbReference type="RefSeq" id="WP_011646739.1">
    <property type="nucleotide sequence ID" value="NC_008358.1"/>
</dbReference>
<dbReference type="SMR" id="Q0C1F4"/>
<dbReference type="STRING" id="228405.HNE_1734"/>
<dbReference type="KEGG" id="hne:HNE_1734"/>
<dbReference type="eggNOG" id="COG0050">
    <property type="taxonomic scope" value="Bacteria"/>
</dbReference>
<dbReference type="HOGENOM" id="CLU_007265_0_0_5"/>
<dbReference type="Proteomes" id="UP000001959">
    <property type="component" value="Chromosome"/>
</dbReference>
<dbReference type="GO" id="GO:0005829">
    <property type="term" value="C:cytosol"/>
    <property type="evidence" value="ECO:0007669"/>
    <property type="project" value="TreeGrafter"/>
</dbReference>
<dbReference type="GO" id="GO:0005525">
    <property type="term" value="F:GTP binding"/>
    <property type="evidence" value="ECO:0007669"/>
    <property type="project" value="UniProtKB-UniRule"/>
</dbReference>
<dbReference type="GO" id="GO:0003924">
    <property type="term" value="F:GTPase activity"/>
    <property type="evidence" value="ECO:0007669"/>
    <property type="project" value="InterPro"/>
</dbReference>
<dbReference type="GO" id="GO:0097216">
    <property type="term" value="F:guanosine tetraphosphate binding"/>
    <property type="evidence" value="ECO:0007669"/>
    <property type="project" value="UniProtKB-ARBA"/>
</dbReference>
<dbReference type="GO" id="GO:0003746">
    <property type="term" value="F:translation elongation factor activity"/>
    <property type="evidence" value="ECO:0007669"/>
    <property type="project" value="UniProtKB-UniRule"/>
</dbReference>
<dbReference type="CDD" id="cd01884">
    <property type="entry name" value="EF_Tu"/>
    <property type="match status" value="1"/>
</dbReference>
<dbReference type="CDD" id="cd03697">
    <property type="entry name" value="EFTU_II"/>
    <property type="match status" value="1"/>
</dbReference>
<dbReference type="CDD" id="cd03707">
    <property type="entry name" value="EFTU_III"/>
    <property type="match status" value="1"/>
</dbReference>
<dbReference type="FunFam" id="2.40.30.10:FF:000001">
    <property type="entry name" value="Elongation factor Tu"/>
    <property type="match status" value="1"/>
</dbReference>
<dbReference type="FunFam" id="3.40.50.300:FF:000003">
    <property type="entry name" value="Elongation factor Tu"/>
    <property type="match status" value="1"/>
</dbReference>
<dbReference type="Gene3D" id="3.40.50.300">
    <property type="entry name" value="P-loop containing nucleotide triphosphate hydrolases"/>
    <property type="match status" value="1"/>
</dbReference>
<dbReference type="Gene3D" id="2.40.30.10">
    <property type="entry name" value="Translation factors"/>
    <property type="match status" value="2"/>
</dbReference>
<dbReference type="HAMAP" id="MF_00118_B">
    <property type="entry name" value="EF_Tu_B"/>
    <property type="match status" value="1"/>
</dbReference>
<dbReference type="InterPro" id="IPR041709">
    <property type="entry name" value="EF-Tu_GTP-bd"/>
</dbReference>
<dbReference type="InterPro" id="IPR050055">
    <property type="entry name" value="EF-Tu_GTPase"/>
</dbReference>
<dbReference type="InterPro" id="IPR004161">
    <property type="entry name" value="EFTu-like_2"/>
</dbReference>
<dbReference type="InterPro" id="IPR033720">
    <property type="entry name" value="EFTU_2"/>
</dbReference>
<dbReference type="InterPro" id="IPR031157">
    <property type="entry name" value="G_TR_CS"/>
</dbReference>
<dbReference type="InterPro" id="IPR027417">
    <property type="entry name" value="P-loop_NTPase"/>
</dbReference>
<dbReference type="InterPro" id="IPR005225">
    <property type="entry name" value="Small_GTP-bd"/>
</dbReference>
<dbReference type="InterPro" id="IPR000795">
    <property type="entry name" value="T_Tr_GTP-bd_dom"/>
</dbReference>
<dbReference type="InterPro" id="IPR009000">
    <property type="entry name" value="Transl_B-barrel_sf"/>
</dbReference>
<dbReference type="InterPro" id="IPR009001">
    <property type="entry name" value="Transl_elong_EF1A/Init_IF2_C"/>
</dbReference>
<dbReference type="InterPro" id="IPR004541">
    <property type="entry name" value="Transl_elong_EFTu/EF1A_bac/org"/>
</dbReference>
<dbReference type="InterPro" id="IPR004160">
    <property type="entry name" value="Transl_elong_EFTu/EF1A_C"/>
</dbReference>
<dbReference type="NCBIfam" id="TIGR00485">
    <property type="entry name" value="EF-Tu"/>
    <property type="match status" value="1"/>
</dbReference>
<dbReference type="NCBIfam" id="NF000766">
    <property type="entry name" value="PRK00049.1"/>
    <property type="match status" value="1"/>
</dbReference>
<dbReference type="NCBIfam" id="NF009372">
    <property type="entry name" value="PRK12735.1"/>
    <property type="match status" value="1"/>
</dbReference>
<dbReference type="NCBIfam" id="NF009373">
    <property type="entry name" value="PRK12736.1"/>
    <property type="match status" value="1"/>
</dbReference>
<dbReference type="NCBIfam" id="TIGR00231">
    <property type="entry name" value="small_GTP"/>
    <property type="match status" value="1"/>
</dbReference>
<dbReference type="PANTHER" id="PTHR43721:SF22">
    <property type="entry name" value="ELONGATION FACTOR TU, MITOCHONDRIAL"/>
    <property type="match status" value="1"/>
</dbReference>
<dbReference type="PANTHER" id="PTHR43721">
    <property type="entry name" value="ELONGATION FACTOR TU-RELATED"/>
    <property type="match status" value="1"/>
</dbReference>
<dbReference type="Pfam" id="PF00009">
    <property type="entry name" value="GTP_EFTU"/>
    <property type="match status" value="1"/>
</dbReference>
<dbReference type="Pfam" id="PF03144">
    <property type="entry name" value="GTP_EFTU_D2"/>
    <property type="match status" value="1"/>
</dbReference>
<dbReference type="Pfam" id="PF03143">
    <property type="entry name" value="GTP_EFTU_D3"/>
    <property type="match status" value="1"/>
</dbReference>
<dbReference type="PRINTS" id="PR00315">
    <property type="entry name" value="ELONGATNFCT"/>
</dbReference>
<dbReference type="SUPFAM" id="SSF50465">
    <property type="entry name" value="EF-Tu/eEF-1alpha/eIF2-gamma C-terminal domain"/>
    <property type="match status" value="1"/>
</dbReference>
<dbReference type="SUPFAM" id="SSF52540">
    <property type="entry name" value="P-loop containing nucleoside triphosphate hydrolases"/>
    <property type="match status" value="1"/>
</dbReference>
<dbReference type="SUPFAM" id="SSF50447">
    <property type="entry name" value="Translation proteins"/>
    <property type="match status" value="1"/>
</dbReference>
<dbReference type="PROSITE" id="PS00301">
    <property type="entry name" value="G_TR_1"/>
    <property type="match status" value="1"/>
</dbReference>
<dbReference type="PROSITE" id="PS51722">
    <property type="entry name" value="G_TR_2"/>
    <property type="match status" value="1"/>
</dbReference>
<organism>
    <name type="scientific">Hyphomonas neptunium (strain ATCC 15444)</name>
    <dbReference type="NCBI Taxonomy" id="228405"/>
    <lineage>
        <taxon>Bacteria</taxon>
        <taxon>Pseudomonadati</taxon>
        <taxon>Pseudomonadota</taxon>
        <taxon>Alphaproteobacteria</taxon>
        <taxon>Hyphomonadales</taxon>
        <taxon>Hyphomonadaceae</taxon>
        <taxon>Hyphomonas</taxon>
    </lineage>
</organism>
<keyword id="KW-0963">Cytoplasm</keyword>
<keyword id="KW-0251">Elongation factor</keyword>
<keyword id="KW-0342">GTP-binding</keyword>
<keyword id="KW-0378">Hydrolase</keyword>
<keyword id="KW-0460">Magnesium</keyword>
<keyword id="KW-0479">Metal-binding</keyword>
<keyword id="KW-0547">Nucleotide-binding</keyword>
<keyword id="KW-0648">Protein biosynthesis</keyword>
<keyword id="KW-1185">Reference proteome</keyword>
<accession>Q0C1F4</accession>
<gene>
    <name evidence="2" type="primary">tuf1</name>
    <name type="ordered locus">HNE_1734</name>
</gene>
<reference key="1">
    <citation type="journal article" date="2006" name="J. Bacteriol.">
        <title>Comparative genomic evidence for a close relationship between the dimorphic prosthecate bacteria Hyphomonas neptunium and Caulobacter crescentus.</title>
        <authorList>
            <person name="Badger J.H."/>
            <person name="Hoover T.R."/>
            <person name="Brun Y.V."/>
            <person name="Weiner R.M."/>
            <person name="Laub M.T."/>
            <person name="Alexandre G."/>
            <person name="Mrazek J."/>
            <person name="Ren Q."/>
            <person name="Paulsen I.T."/>
            <person name="Nelson K.E."/>
            <person name="Khouri H.M."/>
            <person name="Radune D."/>
            <person name="Sosa J."/>
            <person name="Dodson R.J."/>
            <person name="Sullivan S.A."/>
            <person name="Rosovitz M.J."/>
            <person name="Madupu R."/>
            <person name="Brinkac L.M."/>
            <person name="Durkin A.S."/>
            <person name="Daugherty S.C."/>
            <person name="Kothari S.P."/>
            <person name="Giglio M.G."/>
            <person name="Zhou L."/>
            <person name="Haft D.H."/>
            <person name="Selengut J.D."/>
            <person name="Davidsen T.M."/>
            <person name="Yang Q."/>
            <person name="Zafar N."/>
            <person name="Ward N.L."/>
        </authorList>
    </citation>
    <scope>NUCLEOTIDE SEQUENCE [LARGE SCALE GENOMIC DNA]</scope>
    <source>
        <strain>ATCC 15444</strain>
    </source>
</reference>
<sequence>MGKAKFERNKPHVNIGTIGHVDHGKTTLTAAITITLAKTGGATAKNYADIDAAPEEKARGITINTAHVEYETPARHYAHVDCPGHADYVKNMITGAAQMDGAILVCSAADGPMPQTREHILLARQVGVPALVVFLNKVDMVDDEELLELVEMEVRELLSSYNFPGDDIPIIKGSALAAVEDRNPEIGQERILELMAAVDEYIPTPERPLDKPFLMPVEDVFSISGRGTVVTGRVEQGIVKVGEEIEIVGIRPTVKTTCTGVEMFRKLLDQGQAGDNIGALLRGVDREGVERGQVLCKPGSITPHTLFEAEAYILTKEEGGRHTPFFTNYRPQFYFRTTDVTGIVKLPEDKEMVLPGDNVKMDVELINPIAMDKGLRFAIREGGRTVGAGVVSEIKK</sequence>
<evidence type="ECO:0000250" key="1"/>
<evidence type="ECO:0000255" key="2">
    <source>
        <dbReference type="HAMAP-Rule" id="MF_00118"/>
    </source>
</evidence>